<dbReference type="EC" id="2.7.11.1" evidence="2"/>
<dbReference type="EC" id="2.7.11.31" evidence="2"/>
<dbReference type="EC" id="2.7.11.26" evidence="2"/>
<dbReference type="EMBL" id="AC131919">
    <property type="status" value="NOT_ANNOTATED_CDS"/>
    <property type="molecule type" value="Genomic_DNA"/>
</dbReference>
<dbReference type="EMBL" id="AC135079">
    <property type="status" value="NOT_ANNOTATED_CDS"/>
    <property type="molecule type" value="Genomic_DNA"/>
</dbReference>
<dbReference type="EMBL" id="AY885266">
    <property type="protein sequence ID" value="AAW79567.1"/>
    <property type="molecule type" value="mRNA"/>
</dbReference>
<dbReference type="CCDS" id="CCDS49574.1"/>
<dbReference type="RefSeq" id="NP_001013385.3">
    <property type="nucleotide sequence ID" value="NM_001013367.3"/>
</dbReference>
<dbReference type="PDB" id="5UFU">
    <property type="method" value="X-ray"/>
    <property type="resolution" value="3.45 A"/>
    <property type="chains" value="A=11-480, A=536-559"/>
</dbReference>
<dbReference type="PDBsum" id="5UFU"/>
<dbReference type="SMR" id="Q5EG47"/>
<dbReference type="BioGRID" id="222923">
    <property type="interactions" value="38"/>
</dbReference>
<dbReference type="ComplexPortal" id="CPX-5698">
    <property type="entry name" value="AMPK complex, alpha1-beta1-gamma1 variant"/>
</dbReference>
<dbReference type="ComplexPortal" id="CPX-5849">
    <property type="entry name" value="AMPK complex, alpha1-beta1-gamma2 variant"/>
</dbReference>
<dbReference type="ComplexPortal" id="CPX-5853">
    <property type="entry name" value="AMPK complex, alpha1-beta2-gamma1 variant"/>
</dbReference>
<dbReference type="ComplexPortal" id="CPX-5855">
    <property type="entry name" value="AMPK complex, alpha1-beta2-gamma3 variant"/>
</dbReference>
<dbReference type="ComplexPortal" id="CPX-5856">
    <property type="entry name" value="AMPK complex, alpha1-beta1-gamma3 variant"/>
</dbReference>
<dbReference type="ComplexPortal" id="CPX-5860">
    <property type="entry name" value="AMPK complex, alpha1-beta2-gamma2 variant"/>
</dbReference>
<dbReference type="CORUM" id="Q5EG47"/>
<dbReference type="DIP" id="DIP-47622N"/>
<dbReference type="FunCoup" id="Q5EG47">
    <property type="interactions" value="4322"/>
</dbReference>
<dbReference type="IntAct" id="Q5EG47">
    <property type="interactions" value="28"/>
</dbReference>
<dbReference type="MINT" id="Q5EG47"/>
<dbReference type="STRING" id="10090.ENSMUSP00000063166"/>
<dbReference type="BindingDB" id="Q5EG47"/>
<dbReference type="ChEMBL" id="CHEMBL1075161"/>
<dbReference type="CarbonylDB" id="Q5EG47"/>
<dbReference type="GlyGen" id="Q5EG47">
    <property type="glycosylation" value="1 site, 1 O-linked glycan (1 site)"/>
</dbReference>
<dbReference type="iPTMnet" id="Q5EG47"/>
<dbReference type="PhosphoSitePlus" id="Q5EG47"/>
<dbReference type="SwissPalm" id="Q5EG47"/>
<dbReference type="jPOST" id="Q5EG47"/>
<dbReference type="PaxDb" id="10090-ENSMUSP00000063166"/>
<dbReference type="ProteomicsDB" id="286040"/>
<dbReference type="Pumba" id="Q5EG47"/>
<dbReference type="Antibodypedia" id="3564">
    <property type="antibodies" value="1444 antibodies from 46 providers"/>
</dbReference>
<dbReference type="DNASU" id="105787"/>
<dbReference type="Ensembl" id="ENSMUST00000051186.9">
    <property type="protein sequence ID" value="ENSMUSP00000063166.9"/>
    <property type="gene ID" value="ENSMUSG00000050697.10"/>
</dbReference>
<dbReference type="GeneID" id="105787"/>
<dbReference type="KEGG" id="mmu:105787"/>
<dbReference type="UCSC" id="uc007vct.1">
    <property type="organism name" value="mouse"/>
</dbReference>
<dbReference type="AGR" id="MGI:2145955"/>
<dbReference type="CTD" id="5562"/>
<dbReference type="MGI" id="MGI:2145955">
    <property type="gene designation" value="Prkaa1"/>
</dbReference>
<dbReference type="VEuPathDB" id="HostDB:ENSMUSG00000050697"/>
<dbReference type="eggNOG" id="KOG0583">
    <property type="taxonomic scope" value="Eukaryota"/>
</dbReference>
<dbReference type="GeneTree" id="ENSGT00940000158865"/>
<dbReference type="HOGENOM" id="CLU_000288_59_3_1"/>
<dbReference type="InParanoid" id="Q5EG47"/>
<dbReference type="OMA" id="GSWLKMA"/>
<dbReference type="OrthoDB" id="193931at2759"/>
<dbReference type="PhylomeDB" id="Q5EG47"/>
<dbReference type="TreeFam" id="TF314032"/>
<dbReference type="BRENDA" id="2.7.11.26">
    <property type="organism ID" value="3474"/>
</dbReference>
<dbReference type="BRENDA" id="2.7.11.27">
    <property type="organism ID" value="3474"/>
</dbReference>
<dbReference type="BRENDA" id="2.7.11.31">
    <property type="organism ID" value="3474"/>
</dbReference>
<dbReference type="Reactome" id="R-MMU-1632852">
    <property type="pathway name" value="Macroautophagy"/>
</dbReference>
<dbReference type="Reactome" id="R-MMU-380972">
    <property type="pathway name" value="Energy dependent regulation of mTOR by LKB1-AMPK"/>
</dbReference>
<dbReference type="Reactome" id="R-MMU-5628897">
    <property type="pathway name" value="TP53 Regulates Metabolic Genes"/>
</dbReference>
<dbReference type="Reactome" id="R-MMU-6804756">
    <property type="pathway name" value="Regulation of TP53 Activity through Phosphorylation"/>
</dbReference>
<dbReference type="BioGRID-ORCS" id="105787">
    <property type="hits" value="9 hits in 88 CRISPR screens"/>
</dbReference>
<dbReference type="CD-CODE" id="01CA17F3">
    <property type="entry name" value="Centrosome"/>
</dbReference>
<dbReference type="ChiTaRS" id="Prkaa1">
    <property type="organism name" value="mouse"/>
</dbReference>
<dbReference type="PRO" id="PR:Q5EG47"/>
<dbReference type="Proteomes" id="UP000000589">
    <property type="component" value="Chromosome 15"/>
</dbReference>
<dbReference type="RNAct" id="Q5EG47">
    <property type="molecule type" value="protein"/>
</dbReference>
<dbReference type="Bgee" id="ENSMUSG00000050697">
    <property type="expression patterns" value="Expressed in granulocyte and 226 other cell types or tissues"/>
</dbReference>
<dbReference type="ExpressionAtlas" id="Q5EG47">
    <property type="expression patterns" value="baseline and differential"/>
</dbReference>
<dbReference type="GO" id="GO:0016324">
    <property type="term" value="C:apical plasma membrane"/>
    <property type="evidence" value="ECO:0007669"/>
    <property type="project" value="Ensembl"/>
</dbReference>
<dbReference type="GO" id="GO:0030424">
    <property type="term" value="C:axon"/>
    <property type="evidence" value="ECO:0000316"/>
    <property type="project" value="ARUK-UCL"/>
</dbReference>
<dbReference type="GO" id="GO:0000785">
    <property type="term" value="C:chromatin"/>
    <property type="evidence" value="ECO:0000314"/>
    <property type="project" value="UniProt"/>
</dbReference>
<dbReference type="GO" id="GO:0036064">
    <property type="term" value="C:ciliary basal body"/>
    <property type="evidence" value="ECO:0007669"/>
    <property type="project" value="Ensembl"/>
</dbReference>
<dbReference type="GO" id="GO:0005737">
    <property type="term" value="C:cytoplasm"/>
    <property type="evidence" value="ECO:0000314"/>
    <property type="project" value="ARUK-UCL"/>
</dbReference>
<dbReference type="GO" id="GO:0005829">
    <property type="term" value="C:cytosol"/>
    <property type="evidence" value="ECO:0007669"/>
    <property type="project" value="Ensembl"/>
</dbReference>
<dbReference type="GO" id="GO:0030425">
    <property type="term" value="C:dendrite"/>
    <property type="evidence" value="ECO:0000316"/>
    <property type="project" value="ARUK-UCL"/>
</dbReference>
<dbReference type="GO" id="GO:0043025">
    <property type="term" value="C:neuronal cell body"/>
    <property type="evidence" value="ECO:0000316"/>
    <property type="project" value="ARUK-UCL"/>
</dbReference>
<dbReference type="GO" id="GO:0016607">
    <property type="term" value="C:nuclear speck"/>
    <property type="evidence" value="ECO:0007669"/>
    <property type="project" value="Ensembl"/>
</dbReference>
<dbReference type="GO" id="GO:0031588">
    <property type="term" value="C:nucleotide-activated protein kinase complex"/>
    <property type="evidence" value="ECO:0000250"/>
    <property type="project" value="UniProtKB"/>
</dbReference>
<dbReference type="GO" id="GO:0005634">
    <property type="term" value="C:nucleus"/>
    <property type="evidence" value="ECO:0000314"/>
    <property type="project" value="UniProtKB"/>
</dbReference>
<dbReference type="GO" id="GO:0047322">
    <property type="term" value="F:[hydroxymethylglutaryl-CoA reductase (NADPH)] kinase activity"/>
    <property type="evidence" value="ECO:0007669"/>
    <property type="project" value="UniProtKB-EC"/>
</dbReference>
<dbReference type="GO" id="GO:0004679">
    <property type="term" value="F:AMP-activated protein kinase activity"/>
    <property type="evidence" value="ECO:0000314"/>
    <property type="project" value="UniProtKB"/>
</dbReference>
<dbReference type="GO" id="GO:0005524">
    <property type="term" value="F:ATP binding"/>
    <property type="evidence" value="ECO:0007669"/>
    <property type="project" value="UniProtKB-KW"/>
</dbReference>
<dbReference type="GO" id="GO:0003682">
    <property type="term" value="F:chromatin binding"/>
    <property type="evidence" value="ECO:0000314"/>
    <property type="project" value="UniProtKB"/>
</dbReference>
<dbReference type="GO" id="GO:0140823">
    <property type="term" value="F:histone H2BS36 kinase activity"/>
    <property type="evidence" value="ECO:0000314"/>
    <property type="project" value="UniProtKB"/>
</dbReference>
<dbReference type="GO" id="GO:0046872">
    <property type="term" value="F:metal ion binding"/>
    <property type="evidence" value="ECO:0007669"/>
    <property type="project" value="UniProtKB-KW"/>
</dbReference>
<dbReference type="GO" id="GO:0106310">
    <property type="term" value="F:protein serine kinase activity"/>
    <property type="evidence" value="ECO:0007669"/>
    <property type="project" value="RHEA"/>
</dbReference>
<dbReference type="GO" id="GO:0004674">
    <property type="term" value="F:protein serine/threonine kinase activity"/>
    <property type="evidence" value="ECO:0000314"/>
    <property type="project" value="UniProtKB"/>
</dbReference>
<dbReference type="GO" id="GO:0044877">
    <property type="term" value="F:protein-containing complex binding"/>
    <property type="evidence" value="ECO:0007669"/>
    <property type="project" value="Ensembl"/>
</dbReference>
<dbReference type="GO" id="GO:0006914">
    <property type="term" value="P:autophagy"/>
    <property type="evidence" value="ECO:0007669"/>
    <property type="project" value="UniProtKB-KW"/>
</dbReference>
<dbReference type="GO" id="GO:0061762">
    <property type="term" value="P:CAMKK-AMPK signaling cascade"/>
    <property type="evidence" value="ECO:0007669"/>
    <property type="project" value="Ensembl"/>
</dbReference>
<dbReference type="GO" id="GO:0071277">
    <property type="term" value="P:cellular response to calcium ion"/>
    <property type="evidence" value="ECO:0000316"/>
    <property type="project" value="ARUK-UCL"/>
</dbReference>
<dbReference type="GO" id="GO:0071361">
    <property type="term" value="P:cellular response to ethanol"/>
    <property type="evidence" value="ECO:0007669"/>
    <property type="project" value="Ensembl"/>
</dbReference>
<dbReference type="GO" id="GO:0042149">
    <property type="term" value="P:cellular response to glucose starvation"/>
    <property type="evidence" value="ECO:0000314"/>
    <property type="project" value="UniProtKB"/>
</dbReference>
<dbReference type="GO" id="GO:0071333">
    <property type="term" value="P:cellular response to glucose stimulus"/>
    <property type="evidence" value="ECO:0000316"/>
    <property type="project" value="ARUK-UCL"/>
</dbReference>
<dbReference type="GO" id="GO:0070301">
    <property type="term" value="P:cellular response to hydrogen peroxide"/>
    <property type="evidence" value="ECO:0007669"/>
    <property type="project" value="Ensembl"/>
</dbReference>
<dbReference type="GO" id="GO:0071456">
    <property type="term" value="P:cellular response to hypoxia"/>
    <property type="evidence" value="ECO:0007669"/>
    <property type="project" value="Ensembl"/>
</dbReference>
<dbReference type="GO" id="GO:0031669">
    <property type="term" value="P:cellular response to nutrient levels"/>
    <property type="evidence" value="ECO:0000314"/>
    <property type="project" value="UniProtKB"/>
</dbReference>
<dbReference type="GO" id="GO:0034599">
    <property type="term" value="P:cellular response to oxidative stress"/>
    <property type="evidence" value="ECO:0000316"/>
    <property type="project" value="ARUK-UCL"/>
</dbReference>
<dbReference type="GO" id="GO:0071380">
    <property type="term" value="P:cellular response to prostaglandin E stimulus"/>
    <property type="evidence" value="ECO:0000316"/>
    <property type="project" value="MGI"/>
</dbReference>
<dbReference type="GO" id="GO:0071466">
    <property type="term" value="P:cellular response to xenobiotic stimulus"/>
    <property type="evidence" value="ECO:0007669"/>
    <property type="project" value="Ensembl"/>
</dbReference>
<dbReference type="GO" id="GO:0006695">
    <property type="term" value="P:cholesterol biosynthetic process"/>
    <property type="evidence" value="ECO:0007669"/>
    <property type="project" value="UniProtKB-KW"/>
</dbReference>
<dbReference type="GO" id="GO:0009631">
    <property type="term" value="P:cold acclimation"/>
    <property type="evidence" value="ECO:0007669"/>
    <property type="project" value="Ensembl"/>
</dbReference>
<dbReference type="GO" id="GO:0097009">
    <property type="term" value="P:energy homeostasis"/>
    <property type="evidence" value="ECO:0000314"/>
    <property type="project" value="UniProtKB"/>
</dbReference>
<dbReference type="GO" id="GO:0006633">
    <property type="term" value="P:fatty acid biosynthetic process"/>
    <property type="evidence" value="ECO:0007669"/>
    <property type="project" value="UniProtKB-KW"/>
</dbReference>
<dbReference type="GO" id="GO:0055089">
    <property type="term" value="P:fatty acid homeostasis"/>
    <property type="evidence" value="ECO:0000250"/>
    <property type="project" value="UniProtKB"/>
</dbReference>
<dbReference type="GO" id="GO:0019395">
    <property type="term" value="P:fatty acid oxidation"/>
    <property type="evidence" value="ECO:0000315"/>
    <property type="project" value="MGI"/>
</dbReference>
<dbReference type="GO" id="GO:0042593">
    <property type="term" value="P:glucose homeostasis"/>
    <property type="evidence" value="ECO:0000315"/>
    <property type="project" value="UniProtKB"/>
</dbReference>
<dbReference type="GO" id="GO:0006006">
    <property type="term" value="P:glucose metabolic process"/>
    <property type="evidence" value="ECO:0000315"/>
    <property type="project" value="MGI"/>
</dbReference>
<dbReference type="GO" id="GO:0008610">
    <property type="term" value="P:lipid biosynthetic process"/>
    <property type="evidence" value="ECO:0000314"/>
    <property type="project" value="UniProtKB"/>
</dbReference>
<dbReference type="GO" id="GO:1905691">
    <property type="term" value="P:lipid droplet disassembly"/>
    <property type="evidence" value="ECO:0007669"/>
    <property type="project" value="Ensembl"/>
</dbReference>
<dbReference type="GO" id="GO:0061744">
    <property type="term" value="P:motor behavior"/>
    <property type="evidence" value="ECO:0007669"/>
    <property type="project" value="Ensembl"/>
</dbReference>
<dbReference type="GO" id="GO:0043066">
    <property type="term" value="P:negative regulation of apoptotic process"/>
    <property type="evidence" value="ECO:0000315"/>
    <property type="project" value="UniProtKB"/>
</dbReference>
<dbReference type="GO" id="GO:0010629">
    <property type="term" value="P:negative regulation of gene expression"/>
    <property type="evidence" value="ECO:0000316"/>
    <property type="project" value="ARUK-UCL"/>
</dbReference>
<dbReference type="GO" id="GO:1903944">
    <property type="term" value="P:negative regulation of hepatocyte apoptotic process"/>
    <property type="evidence" value="ECO:0000250"/>
    <property type="project" value="UniProtKB"/>
</dbReference>
<dbReference type="GO" id="GO:0046627">
    <property type="term" value="P:negative regulation of insulin receptor signaling pathway"/>
    <property type="evidence" value="ECO:0007669"/>
    <property type="project" value="Ensembl"/>
</dbReference>
<dbReference type="GO" id="GO:0050995">
    <property type="term" value="P:negative regulation of lipid catabolic process"/>
    <property type="evidence" value="ECO:0000314"/>
    <property type="project" value="UniProtKB"/>
</dbReference>
<dbReference type="GO" id="GO:0032007">
    <property type="term" value="P:negative regulation of TOR signaling"/>
    <property type="evidence" value="ECO:0000315"/>
    <property type="project" value="UniProtKB"/>
</dbReference>
<dbReference type="GO" id="GO:1904262">
    <property type="term" value="P:negative regulation of TORC1 signaling"/>
    <property type="evidence" value="ECO:0000314"/>
    <property type="project" value="UniProtKB"/>
</dbReference>
<dbReference type="GO" id="GO:1904428">
    <property type="term" value="P:negative regulation of tubulin deacetylation"/>
    <property type="evidence" value="ECO:0000316"/>
    <property type="project" value="ARUK-UCL"/>
</dbReference>
<dbReference type="GO" id="GO:0070050">
    <property type="term" value="P:neuron cellular homeostasis"/>
    <property type="evidence" value="ECO:0007669"/>
    <property type="project" value="Ensembl"/>
</dbReference>
<dbReference type="GO" id="GO:1904179">
    <property type="term" value="P:positive regulation of adipose tissue development"/>
    <property type="evidence" value="ECO:0000314"/>
    <property type="project" value="UniProt"/>
</dbReference>
<dbReference type="GO" id="GO:0010508">
    <property type="term" value="P:positive regulation of autophagy"/>
    <property type="evidence" value="ECO:0000315"/>
    <property type="project" value="UniProtKB"/>
</dbReference>
<dbReference type="GO" id="GO:0008284">
    <property type="term" value="P:positive regulation of cell population proliferation"/>
    <property type="evidence" value="ECO:0007669"/>
    <property type="project" value="Ensembl"/>
</dbReference>
<dbReference type="GO" id="GO:0045893">
    <property type="term" value="P:positive regulation of DNA-templated transcription"/>
    <property type="evidence" value="ECO:0000314"/>
    <property type="project" value="UniProt"/>
</dbReference>
<dbReference type="GO" id="GO:0010628">
    <property type="term" value="P:positive regulation of gene expression"/>
    <property type="evidence" value="ECO:0000315"/>
    <property type="project" value="MGI"/>
</dbReference>
<dbReference type="GO" id="GO:0045821">
    <property type="term" value="P:positive regulation of glycolytic process"/>
    <property type="evidence" value="ECO:0000250"/>
    <property type="project" value="UniProtKB"/>
</dbReference>
<dbReference type="GO" id="GO:1903109">
    <property type="term" value="P:positive regulation of mitochondrial transcription"/>
    <property type="evidence" value="ECO:0000315"/>
    <property type="project" value="UniProtKB"/>
</dbReference>
<dbReference type="GO" id="GO:1903829">
    <property type="term" value="P:positive regulation of protein localization"/>
    <property type="evidence" value="ECO:0000316"/>
    <property type="project" value="ARUK-UCL"/>
</dbReference>
<dbReference type="GO" id="GO:1903955">
    <property type="term" value="P:positive regulation of protein targeting to mitochondrion"/>
    <property type="evidence" value="ECO:0000315"/>
    <property type="project" value="UniProtKB"/>
</dbReference>
<dbReference type="GO" id="GO:0048643">
    <property type="term" value="P:positive regulation of skeletal muscle tissue development"/>
    <property type="evidence" value="ECO:0000315"/>
    <property type="project" value="MGI"/>
</dbReference>
<dbReference type="GO" id="GO:0050870">
    <property type="term" value="P:positive regulation of T cell activation"/>
    <property type="evidence" value="ECO:0007669"/>
    <property type="project" value="Ensembl"/>
</dbReference>
<dbReference type="GO" id="GO:0002842">
    <property type="term" value="P:positive regulation of T cell mediated immune response to tumor cell"/>
    <property type="evidence" value="ECO:0007669"/>
    <property type="project" value="Ensembl"/>
</dbReference>
<dbReference type="GO" id="GO:1990044">
    <property type="term" value="P:protein localization to lipid droplet"/>
    <property type="evidence" value="ECO:0000314"/>
    <property type="project" value="UniProtKB"/>
</dbReference>
<dbReference type="GO" id="GO:0042752">
    <property type="term" value="P:regulation of circadian rhythm"/>
    <property type="evidence" value="ECO:0000315"/>
    <property type="project" value="UniProtKB"/>
</dbReference>
<dbReference type="GO" id="GO:0070507">
    <property type="term" value="P:regulation of microtubule cytoskeleton organization"/>
    <property type="evidence" value="ECO:0000316"/>
    <property type="project" value="ARUK-UCL"/>
</dbReference>
<dbReference type="GO" id="GO:0062028">
    <property type="term" value="P:regulation of stress granule assembly"/>
    <property type="evidence" value="ECO:0000316"/>
    <property type="project" value="ARUK-UCL"/>
</dbReference>
<dbReference type="GO" id="GO:0060627">
    <property type="term" value="P:regulation of vesicle-mediated transport"/>
    <property type="evidence" value="ECO:0007669"/>
    <property type="project" value="Ensembl"/>
</dbReference>
<dbReference type="GO" id="GO:0014823">
    <property type="term" value="P:response to activity"/>
    <property type="evidence" value="ECO:0007669"/>
    <property type="project" value="Ensembl"/>
</dbReference>
<dbReference type="GO" id="GO:0031000">
    <property type="term" value="P:response to caffeine"/>
    <property type="evidence" value="ECO:0007669"/>
    <property type="project" value="Ensembl"/>
</dbReference>
<dbReference type="GO" id="GO:0043627">
    <property type="term" value="P:response to estrogen"/>
    <property type="evidence" value="ECO:0007669"/>
    <property type="project" value="Ensembl"/>
</dbReference>
<dbReference type="GO" id="GO:0010332">
    <property type="term" value="P:response to gamma radiation"/>
    <property type="evidence" value="ECO:0000315"/>
    <property type="project" value="UniProtKB"/>
</dbReference>
<dbReference type="GO" id="GO:0042542">
    <property type="term" value="P:response to hydrogen peroxide"/>
    <property type="evidence" value="ECO:0000315"/>
    <property type="project" value="UniProtKB"/>
</dbReference>
<dbReference type="GO" id="GO:0009411">
    <property type="term" value="P:response to UV"/>
    <property type="evidence" value="ECO:0000315"/>
    <property type="project" value="UniProtKB"/>
</dbReference>
<dbReference type="GO" id="GO:0048511">
    <property type="term" value="P:rhythmic process"/>
    <property type="evidence" value="ECO:0007669"/>
    <property type="project" value="UniProtKB-KW"/>
</dbReference>
<dbReference type="GO" id="GO:0016055">
    <property type="term" value="P:Wnt signaling pathway"/>
    <property type="evidence" value="ECO:0007669"/>
    <property type="project" value="UniProtKB-KW"/>
</dbReference>
<dbReference type="CDD" id="cd12199">
    <property type="entry name" value="AMPKA1_C"/>
    <property type="match status" value="1"/>
</dbReference>
<dbReference type="CDD" id="cd14079">
    <property type="entry name" value="STKc_AMPK_alpha"/>
    <property type="match status" value="1"/>
</dbReference>
<dbReference type="CDD" id="cd14403">
    <property type="entry name" value="UBA_AID_AAPK1"/>
    <property type="match status" value="1"/>
</dbReference>
<dbReference type="FunFam" id="1.10.510.10:FF:000079">
    <property type="entry name" value="Non-specific serine/threonine protein kinase"/>
    <property type="match status" value="1"/>
</dbReference>
<dbReference type="FunFam" id="1.10.8.10:FF:000014">
    <property type="entry name" value="Non-specific serine/threonine protein kinase"/>
    <property type="match status" value="1"/>
</dbReference>
<dbReference type="FunFam" id="3.30.200.20:FF:000136">
    <property type="entry name" value="Non-specific serine/threonine protein kinase"/>
    <property type="match status" value="1"/>
</dbReference>
<dbReference type="FunFam" id="3.30.310.80:FF:000003">
    <property type="entry name" value="Non-specific serine/threonine protein kinase"/>
    <property type="match status" value="1"/>
</dbReference>
<dbReference type="Gene3D" id="1.10.8.10">
    <property type="entry name" value="DNA helicase RuvA subunit, C-terminal domain"/>
    <property type="match status" value="1"/>
</dbReference>
<dbReference type="Gene3D" id="3.30.310.80">
    <property type="entry name" value="Kinase associated domain 1, KA1"/>
    <property type="match status" value="1"/>
</dbReference>
<dbReference type="Gene3D" id="3.30.200.20">
    <property type="entry name" value="Phosphorylase Kinase, domain 1"/>
    <property type="match status" value="1"/>
</dbReference>
<dbReference type="Gene3D" id="1.10.510.10">
    <property type="entry name" value="Transferase(Phosphotransferase) domain 1"/>
    <property type="match status" value="1"/>
</dbReference>
<dbReference type="InterPro" id="IPR032270">
    <property type="entry name" value="AMPK_C"/>
</dbReference>
<dbReference type="InterPro" id="IPR039137">
    <property type="entry name" value="AMPKA1_C"/>
</dbReference>
<dbReference type="InterPro" id="IPR028375">
    <property type="entry name" value="KA1/Ssp2_C"/>
</dbReference>
<dbReference type="InterPro" id="IPR011009">
    <property type="entry name" value="Kinase-like_dom_sf"/>
</dbReference>
<dbReference type="InterPro" id="IPR049020">
    <property type="entry name" value="PRKAA1/2_AID"/>
</dbReference>
<dbReference type="InterPro" id="IPR028797">
    <property type="entry name" value="PRKAA1_UBA"/>
</dbReference>
<dbReference type="InterPro" id="IPR000719">
    <property type="entry name" value="Prot_kinase_dom"/>
</dbReference>
<dbReference type="InterPro" id="IPR017441">
    <property type="entry name" value="Protein_kinase_ATP_BS"/>
</dbReference>
<dbReference type="InterPro" id="IPR008271">
    <property type="entry name" value="Ser/Thr_kinase_AS"/>
</dbReference>
<dbReference type="PANTHER" id="PTHR24346:SF87">
    <property type="entry name" value="ACETYL-COA CARBOXYLASE KINASE"/>
    <property type="match status" value="1"/>
</dbReference>
<dbReference type="PANTHER" id="PTHR24346">
    <property type="entry name" value="MAP/MICROTUBULE AFFINITY-REGULATING KINASE"/>
    <property type="match status" value="1"/>
</dbReference>
<dbReference type="Pfam" id="PF16579">
    <property type="entry name" value="AdenylateSensor"/>
    <property type="match status" value="1"/>
</dbReference>
<dbReference type="Pfam" id="PF21147">
    <property type="entry name" value="AMPK_alpha_AID"/>
    <property type="match status" value="1"/>
</dbReference>
<dbReference type="Pfam" id="PF00069">
    <property type="entry name" value="Pkinase"/>
    <property type="match status" value="1"/>
</dbReference>
<dbReference type="SMART" id="SM00220">
    <property type="entry name" value="S_TKc"/>
    <property type="match status" value="1"/>
</dbReference>
<dbReference type="SUPFAM" id="SSF103243">
    <property type="entry name" value="KA1-like"/>
    <property type="match status" value="1"/>
</dbReference>
<dbReference type="SUPFAM" id="SSF56112">
    <property type="entry name" value="Protein kinase-like (PK-like)"/>
    <property type="match status" value="1"/>
</dbReference>
<dbReference type="PROSITE" id="PS00107">
    <property type="entry name" value="PROTEIN_KINASE_ATP"/>
    <property type="match status" value="1"/>
</dbReference>
<dbReference type="PROSITE" id="PS50011">
    <property type="entry name" value="PROTEIN_KINASE_DOM"/>
    <property type="match status" value="1"/>
</dbReference>
<dbReference type="PROSITE" id="PS00108">
    <property type="entry name" value="PROTEIN_KINASE_ST"/>
    <property type="match status" value="1"/>
</dbReference>
<reference key="1">
    <citation type="journal article" date="2009" name="PLoS Biol.">
        <title>Lineage-specific biology revealed by a finished genome assembly of the mouse.</title>
        <authorList>
            <person name="Church D.M."/>
            <person name="Goodstadt L."/>
            <person name="Hillier L.W."/>
            <person name="Zody M.C."/>
            <person name="Goldstein S."/>
            <person name="She X."/>
            <person name="Bult C.J."/>
            <person name="Agarwala R."/>
            <person name="Cherry J.L."/>
            <person name="DiCuccio M."/>
            <person name="Hlavina W."/>
            <person name="Kapustin Y."/>
            <person name="Meric P."/>
            <person name="Maglott D."/>
            <person name="Birtle Z."/>
            <person name="Marques A.C."/>
            <person name="Graves T."/>
            <person name="Zhou S."/>
            <person name="Teague B."/>
            <person name="Potamousis K."/>
            <person name="Churas C."/>
            <person name="Place M."/>
            <person name="Herschleb J."/>
            <person name="Runnheim R."/>
            <person name="Forrest D."/>
            <person name="Amos-Landgraf J."/>
            <person name="Schwartz D.C."/>
            <person name="Cheng Z."/>
            <person name="Lindblad-Toh K."/>
            <person name="Eichler E.E."/>
            <person name="Ponting C.P."/>
        </authorList>
    </citation>
    <scope>NUCLEOTIDE SEQUENCE [LARGE SCALE GENOMIC DNA]</scope>
    <source>
        <strain>C57BL/6J</strain>
    </source>
</reference>
<reference key="2">
    <citation type="submission" date="2005-01" db="EMBL/GenBank/DDBJ databases">
        <authorList>
            <person name="Xie X."/>
            <person name="Chen Y."/>
        </authorList>
    </citation>
    <scope>NUCLEOTIDE SEQUENCE [MRNA] OF 10-559</scope>
    <source>
        <strain>C57BL/6N</strain>
        <tissue>Muscle</tissue>
    </source>
</reference>
<reference key="3">
    <citation type="journal article" date="2005" name="Cell Metab.">
        <title>Calmodulin-dependent protein kinase kinase-beta is an alternative upstream kinase for AMP-activated protein kinase.</title>
        <authorList>
            <person name="Hawley S.A."/>
            <person name="Pan D.A."/>
            <person name="Mustard K.J."/>
            <person name="Ross L."/>
            <person name="Bain J."/>
            <person name="Edelman A.M."/>
            <person name="Frenguelli B.G."/>
            <person name="Hardie D.G."/>
        </authorList>
    </citation>
    <scope>ACTIVITY REGULATION</scope>
    <scope>PHOSPHORYLATION AT THR-183</scope>
</reference>
<reference key="4">
    <citation type="journal article" date="2005" name="J. Biol. Chem.">
        <title>Anti-lipolytic action of AMP-activated protein kinase in rodent adipocytes.</title>
        <authorList>
            <person name="Daval M."/>
            <person name="Diot-Dupuy F."/>
            <person name="Bazin R."/>
            <person name="Hainault I."/>
            <person name="Viollet B."/>
            <person name="Vaulont S."/>
            <person name="Hajduch E."/>
            <person name="Ferre P."/>
            <person name="Foufelle F."/>
        </authorList>
    </citation>
    <scope>FUNCTION IN PHOSPHORYLATION OF LIPE</scope>
    <scope>MUTAGENESIS OF ASP-168</scope>
</reference>
<reference key="5">
    <citation type="journal article" date="2005" name="J. Biol. Chem.">
        <title>The Ca2+/calmodulin-dependent protein kinase kinases are AMP-activated protein kinase kinases.</title>
        <authorList>
            <person name="Hurley R.L."/>
            <person name="Anderson K.A."/>
            <person name="Franzone J.M."/>
            <person name="Kemp B.E."/>
            <person name="Means A.R."/>
            <person name="Witters L.A."/>
        </authorList>
    </citation>
    <scope>PHOSPHORYLATION AT THR-183</scope>
    <scope>ACTIVITY REGULATION</scope>
</reference>
<reference key="6">
    <citation type="journal article" date="2005" name="Nature">
        <title>The CREB coactivator TORC2 is a key regulator of fasting glucose metabolism.</title>
        <authorList>
            <person name="Koo S.-H."/>
            <person name="Flechner L."/>
            <person name="Qi L."/>
            <person name="Zhang X."/>
            <person name="Screaton R.A."/>
            <person name="Jeffries S."/>
            <person name="Hedrick S."/>
            <person name="Xu W."/>
            <person name="Boussouar F."/>
            <person name="Brindle P."/>
            <person name="Takemori H."/>
            <person name="Montminy M."/>
        </authorList>
    </citation>
    <scope>FUNCTION IN PHOSPHORYLATION OF CRTC2</scope>
</reference>
<reference key="7">
    <citation type="journal article" date="2005" name="Science">
        <title>The kinase LKB1 mediates glucose homeostasis in liver and therapeutic effects of metformin.</title>
        <authorList>
            <person name="Shaw R.J."/>
            <person name="Lamia K.A."/>
            <person name="Vasquez D."/>
            <person name="Koo S.-H."/>
            <person name="Bardeesy N."/>
            <person name="Depinho R.A."/>
            <person name="Montminy M."/>
            <person name="Cantley L.C."/>
        </authorList>
    </citation>
    <scope>FUNCTION IN PHOSPHORYLATION OF CRTC2</scope>
    <scope>PHOSPHORYLATION AT THR-183</scope>
</reference>
<reference key="8">
    <citation type="journal article" date="2006" name="Diabetes">
        <title>AMPK-mediated AS160 phosphorylation in skeletal muscle is dependent on AMPK catalytic and regulatory subunits.</title>
        <authorList>
            <person name="Treebak J.T."/>
            <person name="Glund S."/>
            <person name="Deshmukh A."/>
            <person name="Klein D.K."/>
            <person name="Long Y.C."/>
            <person name="Jensen T.E."/>
            <person name="Jorgensen S.B."/>
            <person name="Viollet B."/>
            <person name="Andersson L."/>
            <person name="Neumann D."/>
            <person name="Wallimann T."/>
            <person name="Richter E.A."/>
            <person name="Chibalin A.V."/>
            <person name="Zierath J.R."/>
            <person name="Wojtaszewski J.F."/>
        </authorList>
    </citation>
    <scope>FUNCTION IN PHOSPHORYLATION OF TBC1D4</scope>
</reference>
<reference key="9">
    <citation type="journal article" date="2006" name="Diabetes">
        <title>Distinct signals regulate AS160 phosphorylation in response to insulin, AICAR, and contraction in mouse skeletal muscle.</title>
        <authorList>
            <person name="Kramer H.F."/>
            <person name="Witczak C.A."/>
            <person name="Fujii N."/>
            <person name="Jessen N."/>
            <person name="Taylor E.B."/>
            <person name="Arnolds D.E."/>
            <person name="Sakamoto K."/>
            <person name="Hirshman M.F."/>
            <person name="Goodyear L.J."/>
        </authorList>
    </citation>
    <scope>FUNCTION IN PHOSPHORYLATION OF TBC1D4</scope>
</reference>
<reference key="10">
    <citation type="journal article" date="2007" name="Proc. Natl. Acad. Sci. U.S.A.">
        <title>Large-scale phosphorylation analysis of mouse liver.</title>
        <authorList>
            <person name="Villen J."/>
            <person name="Beausoleil S.A."/>
            <person name="Gerber S.A."/>
            <person name="Gygi S.P."/>
        </authorList>
    </citation>
    <scope>IDENTIFICATION BY MASS SPECTROMETRY [LARGE SCALE ANALYSIS]</scope>
    <source>
        <tissue>Liver</tissue>
    </source>
</reference>
<reference key="11">
    <citation type="journal article" date="2008" name="Biochem. J.">
        <title>Control of AMPK-related kinases by USP9X and atypical Lys(29)/Lys(33)-linked polyubiquitin chains.</title>
        <authorList>
            <person name="Al-Hakim A.K."/>
            <person name="Zagorska A."/>
            <person name="Chapman L."/>
            <person name="Deak M."/>
            <person name="Peggie M."/>
            <person name="Alessi D.R."/>
        </authorList>
    </citation>
    <scope>UBIQUITINATION</scope>
</reference>
<reference key="12">
    <citation type="journal article" date="2008" name="Mol. Cell">
        <title>AMPK phosphorylation of raptor mediates a metabolic checkpoint.</title>
        <authorList>
            <person name="Gwinn D.M."/>
            <person name="Shackelford D.B."/>
            <person name="Egan D.F."/>
            <person name="Mihaylova M.M."/>
            <person name="Mery A."/>
            <person name="Vasquez D.S."/>
            <person name="Turk B.E."/>
            <person name="Shaw R.J."/>
        </authorList>
    </citation>
    <scope>FUNCTION IN PHOSPHORYLATION OF RPTOR</scope>
</reference>
<reference key="13">
    <citation type="journal article" date="2009" name="Immunity">
        <title>The phagosomal proteome in interferon-gamma-activated macrophages.</title>
        <authorList>
            <person name="Trost M."/>
            <person name="English L."/>
            <person name="Lemieux S."/>
            <person name="Courcelles M."/>
            <person name="Desjardins M."/>
            <person name="Thibault P."/>
        </authorList>
    </citation>
    <scope>PHOSPHORYLATION [LARGE SCALE ANALYSIS] AT SER-496</scope>
    <scope>IDENTIFICATION BY MASS SPECTROMETRY [LARGE SCALE ANALYSIS]</scope>
</reference>
<reference key="14">
    <citation type="journal article" date="2009" name="Science">
        <title>AMPK regulates the circadian clock by cryptochrome phosphorylation and degradation.</title>
        <authorList>
            <person name="Lamia K.A."/>
            <person name="Sachdeva U.M."/>
            <person name="DiTacchio L."/>
            <person name="Williams E.C."/>
            <person name="Alvarez J.G."/>
            <person name="Egan D.F."/>
            <person name="Vasquez D.S."/>
            <person name="Juguilon H."/>
            <person name="Panda S."/>
            <person name="Shaw R.J."/>
            <person name="Thompson C.B."/>
            <person name="Evans R.M."/>
        </authorList>
    </citation>
    <scope>FUNCTION IN PHOSPHORYLATION OF CRY1</scope>
    <scope>SUBCELLULAR LOCATION</scope>
</reference>
<reference key="15">
    <citation type="journal article" date="2010" name="Biochem. Biophys. Res. Commun.">
        <title>AMP-activated protein kinase (AMPK) cross-talks with canonical Wnt signaling via phosphorylation of beta-catenin at Ser 552.</title>
        <authorList>
            <person name="Zhao J."/>
            <person name="Yue W."/>
            <person name="Zhu M.J."/>
            <person name="Sreejayan N."/>
            <person name="Du M."/>
        </authorList>
    </citation>
    <scope>FUNCTION IN PHOSPHORYLATION OF CTNNB1</scope>
</reference>
<reference key="16">
    <citation type="journal article" date="2010" name="Cell">
        <title>A tissue-specific atlas of mouse protein phosphorylation and expression.</title>
        <authorList>
            <person name="Huttlin E.L."/>
            <person name="Jedrychowski M.P."/>
            <person name="Elias J.E."/>
            <person name="Goswami T."/>
            <person name="Rad R."/>
            <person name="Beausoleil S.A."/>
            <person name="Villen J."/>
            <person name="Haas W."/>
            <person name="Sowa M.E."/>
            <person name="Gygi S.P."/>
        </authorList>
    </citation>
    <scope>PHOSPHORYLATION [LARGE SCALE ANALYSIS] AT SER-486 AND THR-490</scope>
    <scope>IDENTIFICATION BY MASS SPECTROMETRY [LARGE SCALE ANALYSIS]</scope>
    <source>
        <tissue>Brain</tissue>
        <tissue>Brown adipose tissue</tissue>
        <tissue>Heart</tissue>
        <tissue>Lung</tissue>
        <tissue>Pancreas</tissue>
        <tissue>Spleen</tissue>
        <tissue>Testis</tissue>
    </source>
</reference>
<reference key="17">
    <citation type="journal article" date="2010" name="Science">
        <title>Signaling kinase AMPK activates stress-promoted transcription via histone H2B phosphorylation.</title>
        <authorList>
            <person name="Bungard D."/>
            <person name="Fuerth B.J."/>
            <person name="Zeng P.Y."/>
            <person name="Faubert B."/>
            <person name="Maas N.L."/>
            <person name="Viollet B."/>
            <person name="Carling D."/>
            <person name="Thompson C.B."/>
            <person name="Jones R.G."/>
            <person name="Berger S.L."/>
        </authorList>
    </citation>
    <scope>FUNCTION IN PHOSPHORYLATION OF H2B</scope>
</reference>
<reference key="18">
    <citation type="journal article" date="2011" name="Autophagy">
        <title>Ulk1-mediated phosphorylation of AMPK constitutes a negative regulatory feedback loop.</title>
        <authorList>
            <person name="Loffler A.S."/>
            <person name="Alers S."/>
            <person name="Dieterle A.M."/>
            <person name="Keppeler H."/>
            <person name="Franz-Wachtel M."/>
            <person name="Kundu M."/>
            <person name="Campbell D.G."/>
            <person name="Wesselborg S."/>
            <person name="Alessi D.R."/>
            <person name="Stork B."/>
        </authorList>
    </citation>
    <scope>PHOSPHORYLATION BY ULK1 AND ULK2</scope>
</reference>
<reference key="19">
    <citation type="journal article" date="2011" name="Cell Metab.">
        <title>AMPK phosphorylates and inhibits SREBP activity to attenuate hepatic steatosis and atherosclerosis in diet-induced insulin-resistant mice.</title>
        <authorList>
            <person name="Li Y."/>
            <person name="Xu S."/>
            <person name="Mihaylova M.M."/>
            <person name="Zheng B."/>
            <person name="Hou X."/>
            <person name="Jiang B."/>
            <person name="Park O."/>
            <person name="Luo Z."/>
            <person name="Lefai E."/>
            <person name="Shyy J.Y."/>
            <person name="Gao B."/>
            <person name="Wierzbicki M."/>
            <person name="Verbeuren T.J."/>
            <person name="Shaw R.J."/>
            <person name="Cohen R.A."/>
            <person name="Zang M."/>
        </authorList>
    </citation>
    <scope>FUNCTION IN PHOSPHORYLATION OF SREBF1 AND SREBF2</scope>
    <scope>ACTIVITY REGULATION</scope>
</reference>
<reference key="20">
    <citation type="journal article" date="2011" name="Nat. Cell Biol.">
        <title>AMPK and mTOR regulate autophagy through direct phosphorylation of Ulk1.</title>
        <authorList>
            <person name="Kim J."/>
            <person name="Kundu M."/>
            <person name="Viollet B."/>
            <person name="Guan K.L."/>
        </authorList>
    </citation>
    <scope>FUNCTION IN PHOSPHORYLATION OF ULK1</scope>
    <scope>MUTAGENESIS OF ASP-168</scope>
</reference>
<reference key="21">
    <citation type="journal article" date="2011" name="Science">
        <title>Phosphorylation of ULK1 (hATG1) by AMP-activated protein kinase connects energy sensing to mitophagy.</title>
        <authorList>
            <person name="Egan D.F."/>
            <person name="Shackelford D.B."/>
            <person name="Mihaylova M.M."/>
            <person name="Gelino S."/>
            <person name="Kohnz R.A."/>
            <person name="Mair W."/>
            <person name="Vasquez D.S."/>
            <person name="Joshi A."/>
            <person name="Gwinn D.M."/>
            <person name="Taylor R."/>
            <person name="Asara J.M."/>
            <person name="Fitzpatrick J."/>
            <person name="Dillin A."/>
            <person name="Viollet B."/>
            <person name="Kundu M."/>
            <person name="Hansen M."/>
            <person name="Shaw R.J."/>
        </authorList>
    </citation>
    <scope>FUNCTION IN PHOSPHORYLATION OF ULK1</scope>
</reference>
<reference key="22">
    <citation type="journal article" date="2013" name="Cell. Mol. Life Sci.">
        <title>A novel AMPK-dependent FoxO3A-SIRT3 intramitochondrial complex sensing glucose levels.</title>
        <authorList>
            <person name="Peserico A."/>
            <person name="Chiacchiera F."/>
            <person name="Grossi V."/>
            <person name="Matrone A."/>
            <person name="Latorre D."/>
            <person name="Simonatto M."/>
            <person name="Fusella A."/>
            <person name="Ryall J.G."/>
            <person name="Finley L.W."/>
            <person name="Haigis M.C."/>
            <person name="Villani G."/>
            <person name="Puri P.L."/>
            <person name="Sartorelli V."/>
            <person name="Simone C."/>
        </authorList>
    </citation>
    <scope>FUNCTION</scope>
</reference>
<reference key="23">
    <citation type="journal article" date="2020" name="Genes Dev.">
        <title>AMPK regulation of Raptor and TSC2 mediate metformin effects on transcriptional control of anabolism and inflammation.</title>
        <authorList>
            <person name="Van Nostrand J.L."/>
            <person name="Hellberg K."/>
            <person name="Luo E.C."/>
            <person name="Van Nostrand E.L."/>
            <person name="Dayn A."/>
            <person name="Yu J."/>
            <person name="Shokhirev M.N."/>
            <person name="Dayn Y."/>
            <person name="Yeo G.W."/>
            <person name="Shaw R.J."/>
        </authorList>
    </citation>
    <scope>FUNCTION</scope>
</reference>
<reference key="24">
    <citation type="journal article" date="2021" name="Mol. Cell">
        <title>Choline kinase alpha 2 acts as a protein kinase to promote lipolysis of lipid droplets.</title>
        <authorList>
            <person name="Liu R."/>
            <person name="Lee J.H."/>
            <person name="Li J."/>
            <person name="Yu R."/>
            <person name="Tan L."/>
            <person name="Xia Y."/>
            <person name="Zheng Y."/>
            <person name="Bian X.L."/>
            <person name="Lorenzi P.L."/>
            <person name="Chen Q."/>
            <person name="Lu Z."/>
        </authorList>
    </citation>
    <scope>FUNCTION</scope>
    <scope>CATALYTIC ACTIVITY</scope>
</reference>
<reference key="25">
    <citation type="journal article" date="2023" name="Hepatology">
        <title>Hepatic mitochondrial NAD + transporter SLC25A47 activates AMPKalpha mediating lipid metabolism and tumorigenesis.</title>
        <authorList>
            <person name="Cheng L."/>
            <person name="Deepak R.N.V.K."/>
            <person name="Wang G."/>
            <person name="Meng Z."/>
            <person name="Tao L."/>
            <person name="Xie M."/>
            <person name="Chi W."/>
            <person name="Zhang Y."/>
            <person name="Yang M."/>
            <person name="Liao Y."/>
            <person name="Chen R."/>
            <person name="Liang Y."/>
            <person name="Zhang J."/>
            <person name="Huang Y."/>
            <person name="Wang W."/>
            <person name="Guo Z."/>
            <person name="Wang Y."/>
            <person name="Lin J.D."/>
            <person name="Fan H."/>
            <person name="Chen L."/>
        </authorList>
    </citation>
    <scope>FUNCTION</scope>
</reference>
<gene>
    <name type="primary">Prkaa1</name>
</gene>
<feature type="chain" id="PRO_0000085590" description="5'-AMP-activated protein kinase catalytic subunit alpha-1">
    <location>
        <begin position="1"/>
        <end position="559"/>
    </location>
</feature>
<feature type="domain" description="Protein kinase" evidence="4">
    <location>
        <begin position="27"/>
        <end position="279"/>
    </location>
</feature>
<feature type="region of interest" description="AIS" evidence="3">
    <location>
        <begin position="302"/>
        <end position="381"/>
    </location>
</feature>
<feature type="region of interest" description="Disordered" evidence="6">
    <location>
        <begin position="485"/>
        <end position="536"/>
    </location>
</feature>
<feature type="compositionally biased region" description="Polar residues" evidence="6">
    <location>
        <begin position="485"/>
        <end position="505"/>
    </location>
</feature>
<feature type="compositionally biased region" description="Low complexity" evidence="6">
    <location>
        <begin position="516"/>
        <end position="535"/>
    </location>
</feature>
<feature type="active site" description="Proton acceptor" evidence="4 5">
    <location>
        <position position="150"/>
    </location>
</feature>
<feature type="binding site" evidence="4">
    <location>
        <begin position="33"/>
        <end position="41"/>
    </location>
    <ligand>
        <name>ATP</name>
        <dbReference type="ChEBI" id="CHEBI:30616"/>
    </ligand>
</feature>
<feature type="binding site" evidence="4">
    <location>
        <position position="56"/>
    </location>
    <ligand>
        <name>ATP</name>
        <dbReference type="ChEBI" id="CHEBI:30616"/>
    </ligand>
</feature>
<feature type="modified residue" description="Phosphothreonine" evidence="3">
    <location>
        <position position="32"/>
    </location>
</feature>
<feature type="modified residue" description="Phosphothreonine; by LKB1 and CaMKK2" evidence="8 9 11">
    <location>
        <position position="183"/>
    </location>
</feature>
<feature type="modified residue" description="Phosphothreonine" evidence="3">
    <location>
        <position position="355"/>
    </location>
</feature>
<feature type="modified residue" description="Phosphoserine" evidence="3">
    <location>
        <position position="356"/>
    </location>
</feature>
<feature type="modified residue" description="Phosphoserine; by ULK1" evidence="2">
    <location>
        <position position="360"/>
    </location>
</feature>
<feature type="modified residue" description="Phosphothreonine; by ULK1" evidence="2">
    <location>
        <position position="368"/>
    </location>
</feature>
<feature type="modified residue" description="Phosphothreonine" evidence="3">
    <location>
        <position position="382"/>
    </location>
</feature>
<feature type="modified residue" description="Phosphoserine; by ULK1" evidence="2">
    <location>
        <position position="397"/>
    </location>
</feature>
<feature type="modified residue" description="Phosphoserine" evidence="3">
    <location>
        <position position="467"/>
    </location>
</feature>
<feature type="modified residue" description="Phosphoserine" evidence="28">
    <location>
        <position position="486"/>
    </location>
</feature>
<feature type="modified residue" description="Phosphothreonine; by ULK1" evidence="2">
    <location>
        <position position="488"/>
    </location>
</feature>
<feature type="modified residue" description="Phosphothreonine" evidence="28">
    <location>
        <position position="490"/>
    </location>
</feature>
<feature type="modified residue" description="Phosphoserine" evidence="27">
    <location>
        <position position="496"/>
    </location>
</feature>
<feature type="modified residue" description="Phosphoserine" evidence="3">
    <location>
        <position position="508"/>
    </location>
</feature>
<feature type="modified residue" description="Phosphoserine" evidence="3">
    <location>
        <position position="524"/>
    </location>
</feature>
<feature type="modified residue" description="Phosphoserine" evidence="3">
    <location>
        <position position="527"/>
    </location>
</feature>
<feature type="mutagenesis site" description="Loss of kinase activity." evidence="7 20">
    <original>D</original>
    <variation>A</variation>
    <location>
        <position position="168"/>
    </location>
</feature>
<feature type="sequence conflict" description="In Ref. 2; AAW79567." evidence="26" ref="2">
    <location>
        <begin position="11"/>
        <end position="12"/>
    </location>
</feature>
<feature type="strand" evidence="29">
    <location>
        <begin position="27"/>
        <end position="35"/>
    </location>
</feature>
<feature type="strand" evidence="29">
    <location>
        <begin position="37"/>
        <end position="46"/>
    </location>
</feature>
<feature type="turn" evidence="29">
    <location>
        <begin position="47"/>
        <end position="49"/>
    </location>
</feature>
<feature type="strand" evidence="29">
    <location>
        <begin position="52"/>
        <end position="59"/>
    </location>
</feature>
<feature type="helix" evidence="29">
    <location>
        <begin position="60"/>
        <end position="65"/>
    </location>
</feature>
<feature type="helix" evidence="29">
    <location>
        <begin position="69"/>
        <end position="81"/>
    </location>
</feature>
<feature type="strand" evidence="29">
    <location>
        <begin position="90"/>
        <end position="95"/>
    </location>
</feature>
<feature type="strand" evidence="29">
    <location>
        <begin position="97"/>
        <end position="105"/>
    </location>
</feature>
<feature type="strand" evidence="29">
    <location>
        <begin position="108"/>
        <end position="111"/>
    </location>
</feature>
<feature type="helix" evidence="29">
    <location>
        <begin position="112"/>
        <end position="118"/>
    </location>
</feature>
<feature type="helix" evidence="29">
    <location>
        <begin position="124"/>
        <end position="142"/>
    </location>
</feature>
<feature type="turn" evidence="29">
    <location>
        <begin position="143"/>
        <end position="145"/>
    </location>
</feature>
<feature type="turn" evidence="29">
    <location>
        <begin position="153"/>
        <end position="155"/>
    </location>
</feature>
<feature type="strand" evidence="29">
    <location>
        <begin position="156"/>
        <end position="158"/>
    </location>
</feature>
<feature type="strand" evidence="29">
    <location>
        <begin position="164"/>
        <end position="166"/>
    </location>
</feature>
<feature type="turn" evidence="29">
    <location>
        <begin position="188"/>
        <end position="190"/>
    </location>
</feature>
<feature type="helix" evidence="29">
    <location>
        <begin position="193"/>
        <end position="196"/>
    </location>
</feature>
<feature type="helix" evidence="29">
    <location>
        <begin position="204"/>
        <end position="220"/>
    </location>
</feature>
<feature type="helix" evidence="29">
    <location>
        <begin position="230"/>
        <end position="238"/>
    </location>
</feature>
<feature type="helix" evidence="29">
    <location>
        <begin position="250"/>
        <end position="259"/>
    </location>
</feature>
<feature type="turn" evidence="29">
    <location>
        <begin position="264"/>
        <end position="266"/>
    </location>
</feature>
<name>AAPK1_MOUSE</name>
<sequence length="559" mass="63929">MRRLSSWRKMATAEKQKHDGRVKIGHYILGDTLGVGTFGKVKVGKHELTGHKVAVKILNRQKIRSLDVVGKIRREIQNLKLFRHPHIIKLYQVISTPSDIFMVMEYVSGGELFDYICKNGRLDEKESRRLFQQILSGVDYCHRHMVVHRDLKPENVLLDAHMNAKIADFGLSNMMSDGEFLRTSCGSPNYAAPEVISGRLYAGPEVDIWSSGVILYALLCGTLPFDDDHVPTLFKKICDGIFYTPQYLNPSVISLLKHMLQVDPMKRAAIKDIREHEWFKQDLPKYLFPEDPSYSSTMIDDEALKEVCEKFECSEEEVLSCLYNRNHQDPLAVAYHLIIDNRRIMNEAKDFYLATSPPDSFLDDHHLTRPHPERVPFLVAETPRARHTLDELNPQKSKHQGVRKAKWHLGIRSQSRPNDIMAEVCRAIKQLDYEWKVVNPYYLRVRRKNPVTSTFSKMSLQLYQVDSRTYLLDFRSIDDEITEAKSGTATPQRSGSISNYRSCQRSDSDAEAQGKPSDVSLTSSVTSLDSSPVDVAPRPGSHTIEFFEMCANLIKILAQ</sequence>
<evidence type="ECO:0000250" key="1"/>
<evidence type="ECO:0000250" key="2">
    <source>
        <dbReference type="UniProtKB" id="P54645"/>
    </source>
</evidence>
<evidence type="ECO:0000250" key="3">
    <source>
        <dbReference type="UniProtKB" id="Q13131"/>
    </source>
</evidence>
<evidence type="ECO:0000255" key="4">
    <source>
        <dbReference type="PROSITE-ProRule" id="PRU00159"/>
    </source>
</evidence>
<evidence type="ECO:0000255" key="5">
    <source>
        <dbReference type="PROSITE-ProRule" id="PRU10027"/>
    </source>
</evidence>
<evidence type="ECO:0000256" key="6">
    <source>
        <dbReference type="SAM" id="MobiDB-lite"/>
    </source>
</evidence>
<evidence type="ECO:0000269" key="7">
    <source>
    </source>
</evidence>
<evidence type="ECO:0000269" key="8">
    <source>
    </source>
</evidence>
<evidence type="ECO:0000269" key="9">
    <source>
    </source>
</evidence>
<evidence type="ECO:0000269" key="10">
    <source>
    </source>
</evidence>
<evidence type="ECO:0000269" key="11">
    <source>
    </source>
</evidence>
<evidence type="ECO:0000269" key="12">
    <source>
    </source>
</evidence>
<evidence type="ECO:0000269" key="13">
    <source>
    </source>
</evidence>
<evidence type="ECO:0000269" key="14">
    <source>
    </source>
</evidence>
<evidence type="ECO:0000269" key="15">
    <source>
    </source>
</evidence>
<evidence type="ECO:0000269" key="16">
    <source>
    </source>
</evidence>
<evidence type="ECO:0000269" key="17">
    <source>
    </source>
</evidence>
<evidence type="ECO:0000269" key="18">
    <source>
    </source>
</evidence>
<evidence type="ECO:0000269" key="19">
    <source>
    </source>
</evidence>
<evidence type="ECO:0000269" key="20">
    <source>
    </source>
</evidence>
<evidence type="ECO:0000269" key="21">
    <source>
    </source>
</evidence>
<evidence type="ECO:0000269" key="22">
    <source>
    </source>
</evidence>
<evidence type="ECO:0000269" key="23">
    <source>
    </source>
</evidence>
<evidence type="ECO:0000269" key="24">
    <source>
    </source>
</evidence>
<evidence type="ECO:0000269" key="25">
    <source>
    </source>
</evidence>
<evidence type="ECO:0000305" key="26"/>
<evidence type="ECO:0007744" key="27">
    <source>
    </source>
</evidence>
<evidence type="ECO:0007744" key="28">
    <source>
    </source>
</evidence>
<evidence type="ECO:0007829" key="29">
    <source>
        <dbReference type="PDB" id="5UFU"/>
    </source>
</evidence>
<comment type="function">
    <text evidence="2 3 7 10 11 12 13 15 16 17 18 19 20 21 22 23 24 25">Catalytic subunit of AMP-activated protein kinase (AMPK), an energy sensor protein kinase that plays a key role in regulating cellular energy metabolism (By similarity). In response to reduction of intracellular ATP levels, AMPK activates energy-producing pathways and inhibits energy-consuming processes: inhibits protein, carbohydrate and lipid biosynthesis, as well as cell growth and proliferation (By similarity). AMPK acts via direct phosphorylation of metabolic enzymes, and by longer-term effects via phosphorylation of transcription regulators (By similarity). Regulates lipid synthesis by phosphorylating and inactivating lipid metabolic enzymes such as ACACA, ACACB, GYS1, HMGCR and LIPE; regulates fatty acid and cholesterol synthesis by phosphorylating acetyl-CoA carboxylase (ACACA and ACACB) and hormone-sensitive lipase (LIPE) enzymes, respectively (PubMed:15878856). Promotes lipolysis of lipid droplets by mediating phosphorylation of isoform 1 of CHKA (CHKalpha2) (PubMed:34077757). Regulates insulin-signaling and glycolysis by phosphorylating IRS1, PFKFB2 and PFKFB3 (By similarity). AMPK stimulates glucose uptake in muscle by increasing the translocation of the glucose transporter SLC2A4/GLUT4 to the plasma membrane, possibly by mediating phosphorylation of TBC1D4/AS160 (PubMed:16804075, PubMed:16804077). Regulates transcription and chromatin structure by phosphorylating transcription regulators involved in energy metabolism such as CRTC2/TORC2, FOXO3, histone H2B, HDAC5, MEF2C, MLXIPL/ChREBP, EP300, HNF4A, p53/TP53, SREBF1, SREBF2 and PPARGC1A (PubMed:16148943, PubMed:16308421, PubMed:20647423, PubMed:21459323). Acts as a key regulator of glucose homeostasis in liver by phosphorylating CRTC2/TORC2, leading to CRTC2/TORC2 sequestration in the cytoplasm (PubMed:16148943, PubMed:16308421). In response to stress, phosphorylates 'Ser-36' of histone H2B (H2BS36ph), leading to promote transcription (PubMed:20647423). Acts as a key regulator of cell growth and proliferation by phosphorylating FNIP1, TSC2, RPTOR, WDR24 and ATG1/ULK1: in response to nutrient limitation, negatively regulates the mTORC1 complex by phosphorylating RPTOR component of the mTORC1 complex and by phosphorylating and activating TSC2 (PubMed:18439900, PubMed:21205641, PubMed:21258367, PubMed:32912901). Also phosphorylates and inhibits GATOR2 subunit WDR24 in response to nutrient limitation, leading to suppress glucose-mediated mTORC1 activation (By similarity). In response to energetic stress, phosphorylates FNIP1, inactivating the non-canonical mTORC1 signaling, thereby promoting nuclear translocation of TFEB and TFE3, and inducing transcription of lysosomal or autophagy genes (By similarity). In response to nutrient limitation, promotes autophagy by phosphorylating and activating ATG1/ULK1 (PubMed:21205641, PubMed:21258367). In that process, it also activates WDR45/WIPI4 (By similarity). Phosphorylates CASP6, thereby preventing its autoprocessing and subsequent activation (By similarity). In response to nutrient limitation, phosphorylates transcription factor FOXO3 promoting FOXO3 mitochondrial import (PubMed:23283301). Also acts as a regulator of cellular polarity by remodeling the actin cytoskeleton; probably by indirectly activating myosin (By similarity). AMPK also acts as a regulator of circadian rhythm by mediating phosphorylation of CRY1, leading to destabilize it (PubMed:19833968). May regulate the Wnt signaling pathway by phosphorylating CTNNB1, leading to stabilize it (PubMed:20361929). Also has tau-protein kinase activity: in response to amyloid beta A4 protein (APP) exposure, activated by CAMKK2, leading to phosphorylation of MAPT/TAU; however the relevance of such data remains unclear in vivo (By similarity). Also phosphorylates CFTR, EEF2K, KLC1, NOS3 and SLC12A1 (By similarity). Regulates hepatic lipogenesis. Activated via SIRT3, represses sterol regulatory element-binding protein (SREBP) transcriptional activities and ATP-consuming lipogenesis to restore cellular energy balance. Upon stress, regulates mitochondrial fragmentation through phosphorylation of MTFR1L (By similarity).</text>
</comment>
<comment type="catalytic activity">
    <reaction evidence="24">
        <text>L-seryl-[protein] + ATP = O-phospho-L-seryl-[protein] + ADP + H(+)</text>
        <dbReference type="Rhea" id="RHEA:17989"/>
        <dbReference type="Rhea" id="RHEA-COMP:9863"/>
        <dbReference type="Rhea" id="RHEA-COMP:11604"/>
        <dbReference type="ChEBI" id="CHEBI:15378"/>
        <dbReference type="ChEBI" id="CHEBI:29999"/>
        <dbReference type="ChEBI" id="CHEBI:30616"/>
        <dbReference type="ChEBI" id="CHEBI:83421"/>
        <dbReference type="ChEBI" id="CHEBI:456216"/>
        <dbReference type="EC" id="2.7.11.1"/>
    </reaction>
</comment>
<comment type="catalytic activity">
    <reaction evidence="2">
        <text>L-threonyl-[protein] + ATP = O-phospho-L-threonyl-[protein] + ADP + H(+)</text>
        <dbReference type="Rhea" id="RHEA:46608"/>
        <dbReference type="Rhea" id="RHEA-COMP:11060"/>
        <dbReference type="Rhea" id="RHEA-COMP:11605"/>
        <dbReference type="ChEBI" id="CHEBI:15378"/>
        <dbReference type="ChEBI" id="CHEBI:30013"/>
        <dbReference type="ChEBI" id="CHEBI:30616"/>
        <dbReference type="ChEBI" id="CHEBI:61977"/>
        <dbReference type="ChEBI" id="CHEBI:456216"/>
        <dbReference type="EC" id="2.7.11.1"/>
    </reaction>
</comment>
<comment type="catalytic activity">
    <reaction evidence="2">
        <text>L-seryl-[acetyl-CoA carboxylase] + ATP = O-phospho-L-seryl-[acetyl-CoA carboxylase] + ADP + H(+)</text>
        <dbReference type="Rhea" id="RHEA:20333"/>
        <dbReference type="Rhea" id="RHEA-COMP:13722"/>
        <dbReference type="Rhea" id="RHEA-COMP:13723"/>
        <dbReference type="ChEBI" id="CHEBI:15378"/>
        <dbReference type="ChEBI" id="CHEBI:29999"/>
        <dbReference type="ChEBI" id="CHEBI:30616"/>
        <dbReference type="ChEBI" id="CHEBI:83421"/>
        <dbReference type="ChEBI" id="CHEBI:456216"/>
    </reaction>
</comment>
<comment type="catalytic activity">
    <reaction evidence="2">
        <text>L-seryl-[3-hydroxy-3-methylglutaryl-coenzyme A reductase] + ATP = O-phospho-L-seryl-[3-hydroxy-3-methylglutaryl-coenzyme A reductase] + ADP + H(+)</text>
        <dbReference type="Rhea" id="RHEA:23172"/>
        <dbReference type="Rhea" id="RHEA-COMP:13692"/>
        <dbReference type="Rhea" id="RHEA-COMP:13693"/>
        <dbReference type="ChEBI" id="CHEBI:15378"/>
        <dbReference type="ChEBI" id="CHEBI:29999"/>
        <dbReference type="ChEBI" id="CHEBI:30616"/>
        <dbReference type="ChEBI" id="CHEBI:83421"/>
        <dbReference type="ChEBI" id="CHEBI:456216"/>
        <dbReference type="EC" id="2.7.11.31"/>
    </reaction>
</comment>
<comment type="catalytic activity">
    <reaction evidence="2">
        <text>L-seryl-[tau protein] + ATP = O-phospho-L-seryl-[tau protein] + ADP + H(+)</text>
        <dbReference type="Rhea" id="RHEA:12801"/>
        <dbReference type="Rhea" id="RHEA-COMP:13701"/>
        <dbReference type="Rhea" id="RHEA-COMP:13702"/>
        <dbReference type="ChEBI" id="CHEBI:15378"/>
        <dbReference type="ChEBI" id="CHEBI:29999"/>
        <dbReference type="ChEBI" id="CHEBI:30616"/>
        <dbReference type="ChEBI" id="CHEBI:83421"/>
        <dbReference type="ChEBI" id="CHEBI:456216"/>
        <dbReference type="EC" id="2.7.11.26"/>
    </reaction>
</comment>
<comment type="catalytic activity">
    <reaction evidence="2">
        <text>L-threonyl-[tau protein] + ATP = O-phospho-L-threonyl-[tau protein] + ADP + H(+)</text>
        <dbReference type="Rhea" id="RHEA:53904"/>
        <dbReference type="Rhea" id="RHEA-COMP:13703"/>
        <dbReference type="Rhea" id="RHEA-COMP:13704"/>
        <dbReference type="ChEBI" id="CHEBI:15378"/>
        <dbReference type="ChEBI" id="CHEBI:30013"/>
        <dbReference type="ChEBI" id="CHEBI:30616"/>
        <dbReference type="ChEBI" id="CHEBI:61977"/>
        <dbReference type="ChEBI" id="CHEBI:456216"/>
        <dbReference type="EC" id="2.7.11.26"/>
    </reaction>
</comment>
<comment type="cofactor">
    <cofactor evidence="1">
        <name>Mg(2+)</name>
        <dbReference type="ChEBI" id="CHEBI:18420"/>
    </cofactor>
</comment>
<comment type="activity regulation">
    <text evidence="8 9 21">Activated by phosphorylation on Thr-183. Binding of AMP to non-catalytic gamma subunit (PRKAG1, PRKAG2 or PRKAG3) results in allosteric activation, inducing phosphorylation on Thr-183. AMP-binding to gamma subunit also sustains activity by preventing dephosphorylation of Thr-183. ADP also stimulates Thr-183 phosphorylation, without stimulating already phosphorylated AMPK. ATP promotes dephosphorylation of Thr-183, rendering the enzyme inactive. Under physiological conditions AMPK mainly exists in its inactive form in complex with ATP, which is much more abundant than AMP. Selectively inhibited by compound C (6-[4-(2-Piperidin-1-yl-ethoxy)-phenyl)]-3-pyridin-4-yl-pyyrazolo[1,5-a] pyrimidine. Activated by resveratrol, a natural polyphenol present in red wine, and S17834, a synthetic polyphenol.</text>
</comment>
<comment type="subunit">
    <text evidence="3">AMPK is a heterotrimer of an alpha catalytic subunit (PRKAA1 or PRKAA2), a beta (PRKAB1 or PRKAB2) and a gamma non-catalytic subunits (PRKAG1, PRKAG2 or PRKAG3). Interacts with FNIP1 and FNIP2.</text>
</comment>
<comment type="interaction">
    <interactant intactId="EBI-7282395">
        <id>Q5EG47</id>
    </interactant>
    <interactant intactId="EBI-1044059">
        <id>P46937</id>
        <label>YAP1</label>
    </interactant>
    <organismsDiffer>true</organismsDiffer>
    <experiments>2</experiments>
</comment>
<comment type="subcellular location">
    <subcellularLocation>
        <location evidence="3">Cytoplasm</location>
    </subcellularLocation>
    <subcellularLocation>
        <location evidence="16">Nucleus</location>
    </subcellularLocation>
    <text evidence="3">In response to stress, recruited by p53/TP53 to specific promoters.</text>
</comment>
<comment type="domain">
    <text evidence="3">The AIS (autoinhibitory sequence) region shows some sequence similarity with the ubiquitin-associated domains and represses kinase activity.</text>
</comment>
<comment type="PTM">
    <text evidence="3">Phosphorylated at Thr-183 by STK11/LKB1 in complex with STE20-related adapter-alpha (STRADA) pseudo kinase and CAB39. Also phosphorylated at Thr-183 by CAMKK2; triggered by a rise in intracellular calcium ions, without detectable changes in the AMP/ATP ratio. CAMKK1 can also phosphorylate Thr-183, but at a much lower level. Dephosphorylated by protein phosphatase 2A and 2C (PP2A and PP2C). Phosphorylated by ULK1 and ULK2; leading to negatively regulate AMPK activity and suggesting the existence of a regulatory feedback loop between ULK1, ULK2 and AMPK. Dephosphorylated by PPM1A and PPM1B (By similarity).</text>
</comment>
<comment type="PTM">
    <text evidence="14">Ubiquitinated.</text>
</comment>
<comment type="PTM">
    <text evidence="3">Glycosylated; O-GlcNAcylated by OGT, promoting the AMP-activated protein kinase (AMPK) activity.</text>
</comment>
<comment type="similarity">
    <text evidence="26">Belongs to the protein kinase superfamily. CAMK Ser/Thr protein kinase family. SNF1 subfamily.</text>
</comment>
<proteinExistence type="evidence at protein level"/>
<organism>
    <name type="scientific">Mus musculus</name>
    <name type="common">Mouse</name>
    <dbReference type="NCBI Taxonomy" id="10090"/>
    <lineage>
        <taxon>Eukaryota</taxon>
        <taxon>Metazoa</taxon>
        <taxon>Chordata</taxon>
        <taxon>Craniata</taxon>
        <taxon>Vertebrata</taxon>
        <taxon>Euteleostomi</taxon>
        <taxon>Mammalia</taxon>
        <taxon>Eutheria</taxon>
        <taxon>Euarchontoglires</taxon>
        <taxon>Glires</taxon>
        <taxon>Rodentia</taxon>
        <taxon>Myomorpha</taxon>
        <taxon>Muroidea</taxon>
        <taxon>Muridae</taxon>
        <taxon>Murinae</taxon>
        <taxon>Mus</taxon>
        <taxon>Mus</taxon>
    </lineage>
</organism>
<protein>
    <recommendedName>
        <fullName>5'-AMP-activated protein kinase catalytic subunit alpha-1</fullName>
        <shortName>AMPK subunit alpha-1</shortName>
        <ecNumber evidence="2">2.7.11.1</ecNumber>
    </recommendedName>
    <alternativeName>
        <fullName>Acetyl-CoA carboxylase kinase</fullName>
        <shortName>ACACA kinase</shortName>
    </alternativeName>
    <alternativeName>
        <fullName>Hydroxymethylglutaryl-CoA reductase kinase</fullName>
        <shortName>HMGCR kinase</shortName>
        <ecNumber evidence="2">2.7.11.31</ecNumber>
    </alternativeName>
    <alternativeName>
        <fullName>Tau-protein kinase PRKAA1</fullName>
        <ecNumber evidence="2">2.7.11.26</ecNumber>
    </alternativeName>
</protein>
<keyword id="KW-0002">3D-structure</keyword>
<keyword id="KW-0067">ATP-binding</keyword>
<keyword id="KW-0072">Autophagy</keyword>
<keyword id="KW-0090">Biological rhythms</keyword>
<keyword id="KW-0152">Cholesterol biosynthesis</keyword>
<keyword id="KW-0153">Cholesterol metabolism</keyword>
<keyword id="KW-0156">Chromatin regulator</keyword>
<keyword id="KW-0963">Cytoplasm</keyword>
<keyword id="KW-0275">Fatty acid biosynthesis</keyword>
<keyword id="KW-0276">Fatty acid metabolism</keyword>
<keyword id="KW-0325">Glycoprotein</keyword>
<keyword id="KW-0418">Kinase</keyword>
<keyword id="KW-0444">Lipid biosynthesis</keyword>
<keyword id="KW-0443">Lipid metabolism</keyword>
<keyword id="KW-0460">Magnesium</keyword>
<keyword id="KW-0479">Metal-binding</keyword>
<keyword id="KW-0547">Nucleotide-binding</keyword>
<keyword id="KW-0539">Nucleus</keyword>
<keyword id="KW-0597">Phosphoprotein</keyword>
<keyword id="KW-1185">Reference proteome</keyword>
<keyword id="KW-0723">Serine/threonine-protein kinase</keyword>
<keyword id="KW-0752">Steroid biosynthesis</keyword>
<keyword id="KW-0753">Steroid metabolism</keyword>
<keyword id="KW-0756">Sterol biosynthesis</keyword>
<keyword id="KW-1207">Sterol metabolism</keyword>
<keyword id="KW-0804">Transcription</keyword>
<keyword id="KW-0805">Transcription regulation</keyword>
<keyword id="KW-0808">Transferase</keyword>
<keyword id="KW-0832">Ubl conjugation</keyword>
<keyword id="KW-0879">Wnt signaling pathway</keyword>
<accession>Q5EG47</accession>